<evidence type="ECO:0000255" key="1">
    <source>
        <dbReference type="HAMAP-Rule" id="MF_00480"/>
    </source>
</evidence>
<evidence type="ECO:0000305" key="2"/>
<proteinExistence type="inferred from homology"/>
<keyword id="KW-0687">Ribonucleoprotein</keyword>
<keyword id="KW-0689">Ribosomal protein</keyword>
<keyword id="KW-0694">RNA-binding</keyword>
<keyword id="KW-0699">rRNA-binding</keyword>
<keyword id="KW-0820">tRNA-binding</keyword>
<dbReference type="EMBL" id="CP001048">
    <property type="protein sequence ID" value="ACC90845.1"/>
    <property type="molecule type" value="Genomic_DNA"/>
</dbReference>
<dbReference type="RefSeq" id="WP_002212324.1">
    <property type="nucleotide sequence ID" value="NZ_CP009780.1"/>
</dbReference>
<dbReference type="SMR" id="B2K5N6"/>
<dbReference type="GeneID" id="97454225"/>
<dbReference type="KEGG" id="ypb:YPTS_3896"/>
<dbReference type="PATRIC" id="fig|502801.10.peg.3361"/>
<dbReference type="GO" id="GO:0015935">
    <property type="term" value="C:small ribosomal subunit"/>
    <property type="evidence" value="ECO:0007669"/>
    <property type="project" value="InterPro"/>
</dbReference>
<dbReference type="GO" id="GO:0019843">
    <property type="term" value="F:rRNA binding"/>
    <property type="evidence" value="ECO:0007669"/>
    <property type="project" value="UniProtKB-UniRule"/>
</dbReference>
<dbReference type="GO" id="GO:0003735">
    <property type="term" value="F:structural constituent of ribosome"/>
    <property type="evidence" value="ECO:0007669"/>
    <property type="project" value="InterPro"/>
</dbReference>
<dbReference type="GO" id="GO:0000049">
    <property type="term" value="F:tRNA binding"/>
    <property type="evidence" value="ECO:0007669"/>
    <property type="project" value="UniProtKB-UniRule"/>
</dbReference>
<dbReference type="GO" id="GO:0006412">
    <property type="term" value="P:translation"/>
    <property type="evidence" value="ECO:0007669"/>
    <property type="project" value="UniProtKB-UniRule"/>
</dbReference>
<dbReference type="CDD" id="cd14869">
    <property type="entry name" value="uS7_Bacteria"/>
    <property type="match status" value="1"/>
</dbReference>
<dbReference type="FunFam" id="1.10.455.10:FF:000001">
    <property type="entry name" value="30S ribosomal protein S7"/>
    <property type="match status" value="1"/>
</dbReference>
<dbReference type="Gene3D" id="1.10.455.10">
    <property type="entry name" value="Ribosomal protein S7 domain"/>
    <property type="match status" value="1"/>
</dbReference>
<dbReference type="HAMAP" id="MF_00480_B">
    <property type="entry name" value="Ribosomal_uS7_B"/>
    <property type="match status" value="1"/>
</dbReference>
<dbReference type="InterPro" id="IPR000235">
    <property type="entry name" value="Ribosomal_uS7"/>
</dbReference>
<dbReference type="InterPro" id="IPR005717">
    <property type="entry name" value="Ribosomal_uS7_bac/org-type"/>
</dbReference>
<dbReference type="InterPro" id="IPR020606">
    <property type="entry name" value="Ribosomal_uS7_CS"/>
</dbReference>
<dbReference type="InterPro" id="IPR023798">
    <property type="entry name" value="Ribosomal_uS7_dom"/>
</dbReference>
<dbReference type="InterPro" id="IPR036823">
    <property type="entry name" value="Ribosomal_uS7_dom_sf"/>
</dbReference>
<dbReference type="NCBIfam" id="TIGR01029">
    <property type="entry name" value="rpsG_bact"/>
    <property type="match status" value="1"/>
</dbReference>
<dbReference type="PANTHER" id="PTHR11205">
    <property type="entry name" value="RIBOSOMAL PROTEIN S7"/>
    <property type="match status" value="1"/>
</dbReference>
<dbReference type="Pfam" id="PF00177">
    <property type="entry name" value="Ribosomal_S7"/>
    <property type="match status" value="1"/>
</dbReference>
<dbReference type="PIRSF" id="PIRSF002122">
    <property type="entry name" value="RPS7p_RPS7a_RPS5e_RPS7o"/>
    <property type="match status" value="1"/>
</dbReference>
<dbReference type="SUPFAM" id="SSF47973">
    <property type="entry name" value="Ribosomal protein S7"/>
    <property type="match status" value="1"/>
</dbReference>
<dbReference type="PROSITE" id="PS00052">
    <property type="entry name" value="RIBOSOMAL_S7"/>
    <property type="match status" value="1"/>
</dbReference>
<sequence length="156" mass="17606">MPRRRVIGQRKILPDPKFGSELLAKFVNILMVDGKKSTAEAIVYTALETLAQRSGKDFLEAFEVALDNVRPTVEVKSRRVGGSTYQVPVEVRPVRRNALAMRWIVDAARKRGDKSMALRLANELSDAAENKGSAVKKREDVHRMAEANKAFAHYRW</sequence>
<accession>B2K5N6</accession>
<feature type="chain" id="PRO_1000126030" description="Small ribosomal subunit protein uS7">
    <location>
        <begin position="1"/>
        <end position="156"/>
    </location>
</feature>
<name>RS7_YERPB</name>
<organism>
    <name type="scientific">Yersinia pseudotuberculosis serotype IB (strain PB1/+)</name>
    <dbReference type="NCBI Taxonomy" id="502801"/>
    <lineage>
        <taxon>Bacteria</taxon>
        <taxon>Pseudomonadati</taxon>
        <taxon>Pseudomonadota</taxon>
        <taxon>Gammaproteobacteria</taxon>
        <taxon>Enterobacterales</taxon>
        <taxon>Yersiniaceae</taxon>
        <taxon>Yersinia</taxon>
    </lineage>
</organism>
<comment type="function">
    <text evidence="1">One of the primary rRNA binding proteins, it binds directly to 16S rRNA where it nucleates assembly of the head domain of the 30S subunit. Is located at the subunit interface close to the decoding center, probably blocks exit of the E-site tRNA.</text>
</comment>
<comment type="subunit">
    <text evidence="1">Part of the 30S ribosomal subunit. Contacts proteins S9 and S11.</text>
</comment>
<comment type="similarity">
    <text evidence="1">Belongs to the universal ribosomal protein uS7 family.</text>
</comment>
<gene>
    <name evidence="1" type="primary">rpsG</name>
    <name type="ordered locus">YPTS_3896</name>
</gene>
<reference key="1">
    <citation type="submission" date="2008-04" db="EMBL/GenBank/DDBJ databases">
        <title>Complete sequence of Yersinia pseudotuberculosis PB1/+.</title>
        <authorList>
            <person name="Copeland A."/>
            <person name="Lucas S."/>
            <person name="Lapidus A."/>
            <person name="Glavina del Rio T."/>
            <person name="Dalin E."/>
            <person name="Tice H."/>
            <person name="Bruce D."/>
            <person name="Goodwin L."/>
            <person name="Pitluck S."/>
            <person name="Munk A.C."/>
            <person name="Brettin T."/>
            <person name="Detter J.C."/>
            <person name="Han C."/>
            <person name="Tapia R."/>
            <person name="Schmutz J."/>
            <person name="Larimer F."/>
            <person name="Land M."/>
            <person name="Hauser L."/>
            <person name="Challacombe J.F."/>
            <person name="Green L."/>
            <person name="Lindler L.E."/>
            <person name="Nikolich M.P."/>
            <person name="Richardson P."/>
        </authorList>
    </citation>
    <scope>NUCLEOTIDE SEQUENCE [LARGE SCALE GENOMIC DNA]</scope>
    <source>
        <strain>PB1/+</strain>
    </source>
</reference>
<protein>
    <recommendedName>
        <fullName evidence="1">Small ribosomal subunit protein uS7</fullName>
    </recommendedName>
    <alternativeName>
        <fullName evidence="2">30S ribosomal protein S7</fullName>
    </alternativeName>
</protein>